<organism>
    <name type="scientific">Danio rerio</name>
    <name type="common">Zebrafish</name>
    <name type="synonym">Brachydanio rerio</name>
    <dbReference type="NCBI Taxonomy" id="7955"/>
    <lineage>
        <taxon>Eukaryota</taxon>
        <taxon>Metazoa</taxon>
        <taxon>Chordata</taxon>
        <taxon>Craniata</taxon>
        <taxon>Vertebrata</taxon>
        <taxon>Euteleostomi</taxon>
        <taxon>Actinopterygii</taxon>
        <taxon>Neopterygii</taxon>
        <taxon>Teleostei</taxon>
        <taxon>Ostariophysi</taxon>
        <taxon>Cypriniformes</taxon>
        <taxon>Danionidae</taxon>
        <taxon>Danioninae</taxon>
        <taxon>Danio</taxon>
    </lineage>
</organism>
<keyword id="KW-0325">Glycoprotein</keyword>
<keyword id="KW-0646">Protease inhibitor</keyword>
<keyword id="KW-1185">Reference proteome</keyword>
<keyword id="KW-0964">Secreted</keyword>
<keyword id="KW-0722">Serine protease inhibitor</keyword>
<keyword id="KW-0732">Signal</keyword>
<accession>B0UYL8</accession>
<reference key="1">
    <citation type="journal article" date="2013" name="Nature">
        <title>The zebrafish reference genome sequence and its relationship to the human genome.</title>
        <authorList>
            <person name="Howe K."/>
            <person name="Clark M.D."/>
            <person name="Torroja C.F."/>
            <person name="Torrance J."/>
            <person name="Berthelot C."/>
            <person name="Muffato M."/>
            <person name="Collins J.E."/>
            <person name="Humphray S."/>
            <person name="McLaren K."/>
            <person name="Matthews L."/>
            <person name="McLaren S."/>
            <person name="Sealy I."/>
            <person name="Caccamo M."/>
            <person name="Churcher C."/>
            <person name="Scott C."/>
            <person name="Barrett J.C."/>
            <person name="Koch R."/>
            <person name="Rauch G.J."/>
            <person name="White S."/>
            <person name="Chow W."/>
            <person name="Kilian B."/>
            <person name="Quintais L.T."/>
            <person name="Guerra-Assuncao J.A."/>
            <person name="Zhou Y."/>
            <person name="Gu Y."/>
            <person name="Yen J."/>
            <person name="Vogel J.H."/>
            <person name="Eyre T."/>
            <person name="Redmond S."/>
            <person name="Banerjee R."/>
            <person name="Chi J."/>
            <person name="Fu B."/>
            <person name="Langley E."/>
            <person name="Maguire S.F."/>
            <person name="Laird G.K."/>
            <person name="Lloyd D."/>
            <person name="Kenyon E."/>
            <person name="Donaldson S."/>
            <person name="Sehra H."/>
            <person name="Almeida-King J."/>
            <person name="Loveland J."/>
            <person name="Trevanion S."/>
            <person name="Jones M."/>
            <person name="Quail M."/>
            <person name="Willey D."/>
            <person name="Hunt A."/>
            <person name="Burton J."/>
            <person name="Sims S."/>
            <person name="McLay K."/>
            <person name="Plumb B."/>
            <person name="Davis J."/>
            <person name="Clee C."/>
            <person name="Oliver K."/>
            <person name="Clark R."/>
            <person name="Riddle C."/>
            <person name="Elliot D."/>
            <person name="Threadgold G."/>
            <person name="Harden G."/>
            <person name="Ware D."/>
            <person name="Begum S."/>
            <person name="Mortimore B."/>
            <person name="Kerry G."/>
            <person name="Heath P."/>
            <person name="Phillimore B."/>
            <person name="Tracey A."/>
            <person name="Corby N."/>
            <person name="Dunn M."/>
            <person name="Johnson C."/>
            <person name="Wood J."/>
            <person name="Clark S."/>
            <person name="Pelan S."/>
            <person name="Griffiths G."/>
            <person name="Smith M."/>
            <person name="Glithero R."/>
            <person name="Howden P."/>
            <person name="Barker N."/>
            <person name="Lloyd C."/>
            <person name="Stevens C."/>
            <person name="Harley J."/>
            <person name="Holt K."/>
            <person name="Panagiotidis G."/>
            <person name="Lovell J."/>
            <person name="Beasley H."/>
            <person name="Henderson C."/>
            <person name="Gordon D."/>
            <person name="Auger K."/>
            <person name="Wright D."/>
            <person name="Collins J."/>
            <person name="Raisen C."/>
            <person name="Dyer L."/>
            <person name="Leung K."/>
            <person name="Robertson L."/>
            <person name="Ambridge K."/>
            <person name="Leongamornlert D."/>
            <person name="McGuire S."/>
            <person name="Gilderthorp R."/>
            <person name="Griffiths C."/>
            <person name="Manthravadi D."/>
            <person name="Nichol S."/>
            <person name="Barker G."/>
            <person name="Whitehead S."/>
            <person name="Kay M."/>
            <person name="Brown J."/>
            <person name="Murnane C."/>
            <person name="Gray E."/>
            <person name="Humphries M."/>
            <person name="Sycamore N."/>
            <person name="Barker D."/>
            <person name="Saunders D."/>
            <person name="Wallis J."/>
            <person name="Babbage A."/>
            <person name="Hammond S."/>
            <person name="Mashreghi-Mohammadi M."/>
            <person name="Barr L."/>
            <person name="Martin S."/>
            <person name="Wray P."/>
            <person name="Ellington A."/>
            <person name="Matthews N."/>
            <person name="Ellwood M."/>
            <person name="Woodmansey R."/>
            <person name="Clark G."/>
            <person name="Cooper J."/>
            <person name="Tromans A."/>
            <person name="Grafham D."/>
            <person name="Skuce C."/>
            <person name="Pandian R."/>
            <person name="Andrews R."/>
            <person name="Harrison E."/>
            <person name="Kimberley A."/>
            <person name="Garnett J."/>
            <person name="Fosker N."/>
            <person name="Hall R."/>
            <person name="Garner P."/>
            <person name="Kelly D."/>
            <person name="Bird C."/>
            <person name="Palmer S."/>
            <person name="Gehring I."/>
            <person name="Berger A."/>
            <person name="Dooley C.M."/>
            <person name="Ersan-Urun Z."/>
            <person name="Eser C."/>
            <person name="Geiger H."/>
            <person name="Geisler M."/>
            <person name="Karotki L."/>
            <person name="Kirn A."/>
            <person name="Konantz J."/>
            <person name="Konantz M."/>
            <person name="Oberlander M."/>
            <person name="Rudolph-Geiger S."/>
            <person name="Teucke M."/>
            <person name="Lanz C."/>
            <person name="Raddatz G."/>
            <person name="Osoegawa K."/>
            <person name="Zhu B."/>
            <person name="Rapp A."/>
            <person name="Widaa S."/>
            <person name="Langford C."/>
            <person name="Yang F."/>
            <person name="Schuster S.C."/>
            <person name="Carter N.P."/>
            <person name="Harrow J."/>
            <person name="Ning Z."/>
            <person name="Herrero J."/>
            <person name="Searle S.M."/>
            <person name="Enright A."/>
            <person name="Geisler R."/>
            <person name="Plasterk R.H."/>
            <person name="Lee C."/>
            <person name="Westerfield M."/>
            <person name="de Jong P.J."/>
            <person name="Zon L.I."/>
            <person name="Postlethwait J.H."/>
            <person name="Nusslein-Volhard C."/>
            <person name="Hubbard T.J."/>
            <person name="Roest Crollius H."/>
            <person name="Rogers J."/>
            <person name="Stemple D.L."/>
        </authorList>
    </citation>
    <scope>NUCLEOTIDE SEQUENCE [LARGE SCALE GENOMIC DNA]</scope>
    <source>
        <strain>Tuebingen</strain>
    </source>
</reference>
<protein>
    <recommendedName>
        <fullName>Probable serpin E3</fullName>
    </recommendedName>
</protein>
<name>SERP3_DANRE</name>
<dbReference type="EMBL" id="CR533429">
    <property type="protein sequence ID" value="CAQ14209.1"/>
    <property type="molecule type" value="Genomic_DNA"/>
</dbReference>
<dbReference type="RefSeq" id="NP_001116709.1">
    <property type="nucleotide sequence ID" value="NM_001123237.1"/>
</dbReference>
<dbReference type="SMR" id="B0UYL8"/>
<dbReference type="FunCoup" id="B0UYL8">
    <property type="interactions" value="3"/>
</dbReference>
<dbReference type="STRING" id="7955.ENSDARP00000119846"/>
<dbReference type="MEROPS" id="I04.972"/>
<dbReference type="GlyCosmos" id="B0UYL8">
    <property type="glycosylation" value="5 sites, No reported glycans"/>
</dbReference>
<dbReference type="PaxDb" id="7955-ENSDARP00000119846"/>
<dbReference type="Ensembl" id="ENSDART00000132915">
    <property type="protein sequence ID" value="ENSDARP00000119846"/>
    <property type="gene ID" value="ENSDARG00000057108"/>
</dbReference>
<dbReference type="GeneID" id="556612"/>
<dbReference type="KEGG" id="dre:556612"/>
<dbReference type="AGR" id="ZFIN:ZDB-GENE-050309-223"/>
<dbReference type="CTD" id="647174"/>
<dbReference type="ZFIN" id="ZDB-GENE-050309-223">
    <property type="gene designation" value="serpine3"/>
</dbReference>
<dbReference type="eggNOG" id="KOG2392">
    <property type="taxonomic scope" value="Eukaryota"/>
</dbReference>
<dbReference type="HOGENOM" id="CLU_023330_0_4_1"/>
<dbReference type="InParanoid" id="B0UYL8"/>
<dbReference type="OMA" id="KGNCISY"/>
<dbReference type="OrthoDB" id="8179360at2759"/>
<dbReference type="PhylomeDB" id="B0UYL8"/>
<dbReference type="TreeFam" id="TF352620"/>
<dbReference type="PRO" id="PR:B0UYL8"/>
<dbReference type="Proteomes" id="UP000000437">
    <property type="component" value="Chromosome 9"/>
</dbReference>
<dbReference type="Bgee" id="ENSDARG00000057108">
    <property type="expression patterns" value="Expressed in heart and 10 other cell types or tissues"/>
</dbReference>
<dbReference type="GO" id="GO:0005615">
    <property type="term" value="C:extracellular space"/>
    <property type="evidence" value="ECO:0000318"/>
    <property type="project" value="GO_Central"/>
</dbReference>
<dbReference type="GO" id="GO:0004867">
    <property type="term" value="F:serine-type endopeptidase inhibitor activity"/>
    <property type="evidence" value="ECO:0000318"/>
    <property type="project" value="GO_Central"/>
</dbReference>
<dbReference type="GO" id="GO:0043010">
    <property type="term" value="P:camera-type eye development"/>
    <property type="evidence" value="ECO:0000315"/>
    <property type="project" value="ZFIN"/>
</dbReference>
<dbReference type="CDD" id="cd19574">
    <property type="entry name" value="serpinE3"/>
    <property type="match status" value="1"/>
</dbReference>
<dbReference type="Gene3D" id="2.30.39.10">
    <property type="entry name" value="Alpha-1-antitrypsin, domain 1"/>
    <property type="match status" value="1"/>
</dbReference>
<dbReference type="Gene3D" id="3.30.497.10">
    <property type="entry name" value="Antithrombin, subunit I, domain 2"/>
    <property type="match status" value="1"/>
</dbReference>
<dbReference type="InterPro" id="IPR023795">
    <property type="entry name" value="Serpin_CS"/>
</dbReference>
<dbReference type="InterPro" id="IPR023796">
    <property type="entry name" value="Serpin_dom"/>
</dbReference>
<dbReference type="InterPro" id="IPR031172">
    <property type="entry name" value="Serpin_E3"/>
</dbReference>
<dbReference type="InterPro" id="IPR000215">
    <property type="entry name" value="Serpin_fam"/>
</dbReference>
<dbReference type="InterPro" id="IPR036186">
    <property type="entry name" value="Serpin_sf"/>
</dbReference>
<dbReference type="InterPro" id="IPR042178">
    <property type="entry name" value="Serpin_sf_1"/>
</dbReference>
<dbReference type="InterPro" id="IPR042185">
    <property type="entry name" value="Serpin_sf_2"/>
</dbReference>
<dbReference type="PANTHER" id="PTHR11461">
    <property type="entry name" value="SERINE PROTEASE INHIBITOR, SERPIN"/>
    <property type="match status" value="1"/>
</dbReference>
<dbReference type="PANTHER" id="PTHR11461:SF129">
    <property type="entry name" value="SERPIN E3"/>
    <property type="match status" value="1"/>
</dbReference>
<dbReference type="Pfam" id="PF00079">
    <property type="entry name" value="Serpin"/>
    <property type="match status" value="1"/>
</dbReference>
<dbReference type="SMART" id="SM00093">
    <property type="entry name" value="SERPIN"/>
    <property type="match status" value="1"/>
</dbReference>
<dbReference type="SUPFAM" id="SSF56574">
    <property type="entry name" value="Serpins"/>
    <property type="match status" value="1"/>
</dbReference>
<dbReference type="PROSITE" id="PS00284">
    <property type="entry name" value="SERPIN"/>
    <property type="match status" value="1"/>
</dbReference>
<proteinExistence type="inferred from homology"/>
<gene>
    <name type="primary">serpine3</name>
    <name type="ORF">im:7152538</name>
    <name type="ORF">si:ch211-219a4.10</name>
</gene>
<feature type="signal peptide" evidence="2">
    <location>
        <begin position="1"/>
        <end position="24"/>
    </location>
</feature>
<feature type="chain" id="PRO_0000340685" description="Probable serpin E3">
    <location>
        <begin position="25"/>
        <end position="417"/>
    </location>
</feature>
<feature type="site" description="Reactive bond" evidence="2">
    <location>
        <begin position="380"/>
        <end position="381"/>
    </location>
</feature>
<feature type="glycosylation site" description="N-linked (GlcNAc...) asparagine" evidence="2">
    <location>
        <position position="50"/>
    </location>
</feature>
<feature type="glycosylation site" description="N-linked (GlcNAc...) asparagine" evidence="2">
    <location>
        <position position="106"/>
    </location>
</feature>
<feature type="glycosylation site" description="N-linked (GlcNAc...) asparagine" evidence="2">
    <location>
        <position position="140"/>
    </location>
</feature>
<feature type="glycosylation site" description="N-linked (GlcNAc...) asparagine" evidence="2">
    <location>
        <position position="147"/>
    </location>
</feature>
<feature type="glycosylation site" description="N-linked (GlcNAc...) asparagine" evidence="2">
    <location>
        <position position="152"/>
    </location>
</feature>
<comment type="function">
    <text evidence="1">Probable serine protease inhibitor.</text>
</comment>
<comment type="subcellular location">
    <subcellularLocation>
        <location evidence="3">Secreted</location>
    </subcellularLocation>
</comment>
<comment type="similarity">
    <text evidence="3">Belongs to the serpin family.</text>
</comment>
<evidence type="ECO:0000250" key="1"/>
<evidence type="ECO:0000255" key="2"/>
<evidence type="ECO:0000305" key="3"/>
<sequence length="417" mass="46401">MPQLSASSLFICLWLVDLCHVANSVLSSSFSDLHTQFGISLYQTLTETENKSNLIVSPASVSLCLGLLQLGARGNTLVQLEGTLGYDVNDVRVQNILSRPQGDLANSSEGLRLQLANALFIQTGVKLLPEFTQHALGWGNTSLLSVNFSNPNHTHSRLQQWAHYQSKADDHLQTREELHHSSGEEEEATRQDHLLYMALVSTLVFHGAWQKQFLFTETQNLPFTFSDGSTVKVPMMYQSSEVNIGHFRLPSEQEYTVLELPYLDHSLRLLVALPSDRKTPLSQLEKQITARAVGLWDTGLRRTKMDIFLPRFKMQSKINLKPVLQSLGVSDIFSPSAADFRGISDTDGIFVSEAFHEARIEVTEAGTKAASATAMVLLKRSRSAVFKADRPFLFILRQISTGSLLFIGRVVNPADMP</sequence>